<feature type="chain" id="PRO_1000087908" description="Bifunctional protein FolD">
    <location>
        <begin position="1"/>
        <end position="284"/>
    </location>
</feature>
<feature type="binding site" evidence="1">
    <location>
        <begin position="164"/>
        <end position="166"/>
    </location>
    <ligand>
        <name>NADP(+)</name>
        <dbReference type="ChEBI" id="CHEBI:58349"/>
    </ligand>
</feature>
<feature type="binding site" evidence="1">
    <location>
        <position position="189"/>
    </location>
    <ligand>
        <name>NADP(+)</name>
        <dbReference type="ChEBI" id="CHEBI:58349"/>
    </ligand>
</feature>
<feature type="binding site" evidence="1">
    <location>
        <position position="230"/>
    </location>
    <ligand>
        <name>NADP(+)</name>
        <dbReference type="ChEBI" id="CHEBI:58349"/>
    </ligand>
</feature>
<sequence>MALIIDGRKVAAAIREEVKSEVDRLKERGIVPRLAVILVGEDPASVLYSRSIEKACTRAGVEYELFALPAGIPEDDVVALLSRLNEDGSVHGIMVELPLPKQMNRQKVLEAVSPVKDVDGVHPVNRGYIMSNSEGLFPTTPMSCIEIMLRNGIEIKGKHAVLVGRGESVGKPLVYMMLNQNATVTVCHTFTNDLAYHTRQADILVVAVGKAGMITGDMVKPGAVVVDAGINEAKDGGICGDVDFDSVARVAGAISPVPGGVGSLTTTLILKNTLKAIRLQGGKV</sequence>
<organism>
    <name type="scientific">Pelotomaculum thermopropionicum (strain DSM 13744 / JCM 10971 / SI)</name>
    <dbReference type="NCBI Taxonomy" id="370438"/>
    <lineage>
        <taxon>Bacteria</taxon>
        <taxon>Bacillati</taxon>
        <taxon>Bacillota</taxon>
        <taxon>Clostridia</taxon>
        <taxon>Eubacteriales</taxon>
        <taxon>Desulfotomaculaceae</taxon>
        <taxon>Pelotomaculum</taxon>
    </lineage>
</organism>
<dbReference type="EC" id="1.5.1.5" evidence="1"/>
<dbReference type="EC" id="3.5.4.9" evidence="1"/>
<dbReference type="EMBL" id="AP009389">
    <property type="protein sequence ID" value="BAF59364.1"/>
    <property type="molecule type" value="Genomic_DNA"/>
</dbReference>
<dbReference type="SMR" id="A5D323"/>
<dbReference type="STRING" id="370438.PTH_1183"/>
<dbReference type="KEGG" id="pth:PTH_1183"/>
<dbReference type="eggNOG" id="COG0190">
    <property type="taxonomic scope" value="Bacteria"/>
</dbReference>
<dbReference type="HOGENOM" id="CLU_034045_2_1_9"/>
<dbReference type="UniPathway" id="UPA00193"/>
<dbReference type="Proteomes" id="UP000006556">
    <property type="component" value="Chromosome"/>
</dbReference>
<dbReference type="GO" id="GO:0005829">
    <property type="term" value="C:cytosol"/>
    <property type="evidence" value="ECO:0007669"/>
    <property type="project" value="TreeGrafter"/>
</dbReference>
<dbReference type="GO" id="GO:0004477">
    <property type="term" value="F:methenyltetrahydrofolate cyclohydrolase activity"/>
    <property type="evidence" value="ECO:0007669"/>
    <property type="project" value="UniProtKB-UniRule"/>
</dbReference>
<dbReference type="GO" id="GO:0004488">
    <property type="term" value="F:methylenetetrahydrofolate dehydrogenase (NADP+) activity"/>
    <property type="evidence" value="ECO:0007669"/>
    <property type="project" value="UniProtKB-UniRule"/>
</dbReference>
<dbReference type="GO" id="GO:0000105">
    <property type="term" value="P:L-histidine biosynthetic process"/>
    <property type="evidence" value="ECO:0007669"/>
    <property type="project" value="UniProtKB-KW"/>
</dbReference>
<dbReference type="GO" id="GO:0009086">
    <property type="term" value="P:methionine biosynthetic process"/>
    <property type="evidence" value="ECO:0007669"/>
    <property type="project" value="UniProtKB-KW"/>
</dbReference>
<dbReference type="GO" id="GO:0006164">
    <property type="term" value="P:purine nucleotide biosynthetic process"/>
    <property type="evidence" value="ECO:0007669"/>
    <property type="project" value="UniProtKB-KW"/>
</dbReference>
<dbReference type="GO" id="GO:0035999">
    <property type="term" value="P:tetrahydrofolate interconversion"/>
    <property type="evidence" value="ECO:0007669"/>
    <property type="project" value="UniProtKB-UniRule"/>
</dbReference>
<dbReference type="CDD" id="cd01080">
    <property type="entry name" value="NAD_bind_m-THF_DH_Cyclohyd"/>
    <property type="match status" value="1"/>
</dbReference>
<dbReference type="FunFam" id="3.40.50.720:FF:000094">
    <property type="entry name" value="Bifunctional protein FolD"/>
    <property type="match status" value="1"/>
</dbReference>
<dbReference type="FunFam" id="3.40.50.10860:FF:000005">
    <property type="entry name" value="C-1-tetrahydrofolate synthase, cytoplasmic, putative"/>
    <property type="match status" value="1"/>
</dbReference>
<dbReference type="Gene3D" id="3.40.50.10860">
    <property type="entry name" value="Leucine Dehydrogenase, chain A, domain 1"/>
    <property type="match status" value="1"/>
</dbReference>
<dbReference type="Gene3D" id="3.40.50.720">
    <property type="entry name" value="NAD(P)-binding Rossmann-like Domain"/>
    <property type="match status" value="1"/>
</dbReference>
<dbReference type="HAMAP" id="MF_01576">
    <property type="entry name" value="THF_DHG_CYH"/>
    <property type="match status" value="1"/>
</dbReference>
<dbReference type="InterPro" id="IPR046346">
    <property type="entry name" value="Aminoacid_DH-like_N_sf"/>
</dbReference>
<dbReference type="InterPro" id="IPR036291">
    <property type="entry name" value="NAD(P)-bd_dom_sf"/>
</dbReference>
<dbReference type="InterPro" id="IPR000672">
    <property type="entry name" value="THF_DH/CycHdrlase"/>
</dbReference>
<dbReference type="InterPro" id="IPR020630">
    <property type="entry name" value="THF_DH/CycHdrlase_cat_dom"/>
</dbReference>
<dbReference type="InterPro" id="IPR020631">
    <property type="entry name" value="THF_DH/CycHdrlase_NAD-bd_dom"/>
</dbReference>
<dbReference type="PANTHER" id="PTHR48099:SF5">
    <property type="entry name" value="C-1-TETRAHYDROFOLATE SYNTHASE, CYTOPLASMIC"/>
    <property type="match status" value="1"/>
</dbReference>
<dbReference type="PANTHER" id="PTHR48099">
    <property type="entry name" value="C-1-TETRAHYDROFOLATE SYNTHASE, CYTOPLASMIC-RELATED"/>
    <property type="match status" value="1"/>
</dbReference>
<dbReference type="Pfam" id="PF00763">
    <property type="entry name" value="THF_DHG_CYH"/>
    <property type="match status" value="1"/>
</dbReference>
<dbReference type="Pfam" id="PF02882">
    <property type="entry name" value="THF_DHG_CYH_C"/>
    <property type="match status" value="1"/>
</dbReference>
<dbReference type="PRINTS" id="PR00085">
    <property type="entry name" value="THFDHDRGNASE"/>
</dbReference>
<dbReference type="SUPFAM" id="SSF53223">
    <property type="entry name" value="Aminoacid dehydrogenase-like, N-terminal domain"/>
    <property type="match status" value="1"/>
</dbReference>
<dbReference type="SUPFAM" id="SSF51735">
    <property type="entry name" value="NAD(P)-binding Rossmann-fold domains"/>
    <property type="match status" value="1"/>
</dbReference>
<reference key="1">
    <citation type="journal article" date="2008" name="Genome Res.">
        <title>The genome of Pelotomaculum thermopropionicum reveals niche-associated evolution in anaerobic microbiota.</title>
        <authorList>
            <person name="Kosaka T."/>
            <person name="Kato S."/>
            <person name="Shimoyama T."/>
            <person name="Ishii S."/>
            <person name="Abe T."/>
            <person name="Watanabe K."/>
        </authorList>
    </citation>
    <scope>NUCLEOTIDE SEQUENCE [LARGE SCALE GENOMIC DNA]</scope>
    <source>
        <strain>DSM 13744 / JCM 10971 / SI</strain>
    </source>
</reference>
<name>FOLD_PELTS</name>
<keyword id="KW-0028">Amino-acid biosynthesis</keyword>
<keyword id="KW-0368">Histidine biosynthesis</keyword>
<keyword id="KW-0378">Hydrolase</keyword>
<keyword id="KW-0486">Methionine biosynthesis</keyword>
<keyword id="KW-0511">Multifunctional enzyme</keyword>
<keyword id="KW-0521">NADP</keyword>
<keyword id="KW-0554">One-carbon metabolism</keyword>
<keyword id="KW-0560">Oxidoreductase</keyword>
<keyword id="KW-0658">Purine biosynthesis</keyword>
<keyword id="KW-1185">Reference proteome</keyword>
<protein>
    <recommendedName>
        <fullName evidence="1">Bifunctional protein FolD</fullName>
    </recommendedName>
    <domain>
        <recommendedName>
            <fullName evidence="1">Methylenetetrahydrofolate dehydrogenase</fullName>
            <ecNumber evidence="1">1.5.1.5</ecNumber>
        </recommendedName>
    </domain>
    <domain>
        <recommendedName>
            <fullName evidence="1">Methenyltetrahydrofolate cyclohydrolase</fullName>
            <ecNumber evidence="1">3.5.4.9</ecNumber>
        </recommendedName>
    </domain>
</protein>
<accession>A5D323</accession>
<proteinExistence type="inferred from homology"/>
<gene>
    <name evidence="1" type="primary">folD</name>
    <name type="ordered locus">PTH_1183</name>
</gene>
<comment type="function">
    <text evidence="1">Catalyzes the oxidation of 5,10-methylenetetrahydrofolate to 5,10-methenyltetrahydrofolate and then the hydrolysis of 5,10-methenyltetrahydrofolate to 10-formyltetrahydrofolate.</text>
</comment>
<comment type="catalytic activity">
    <reaction evidence="1">
        <text>(6R)-5,10-methylene-5,6,7,8-tetrahydrofolate + NADP(+) = (6R)-5,10-methenyltetrahydrofolate + NADPH</text>
        <dbReference type="Rhea" id="RHEA:22812"/>
        <dbReference type="ChEBI" id="CHEBI:15636"/>
        <dbReference type="ChEBI" id="CHEBI:57455"/>
        <dbReference type="ChEBI" id="CHEBI:57783"/>
        <dbReference type="ChEBI" id="CHEBI:58349"/>
        <dbReference type="EC" id="1.5.1.5"/>
    </reaction>
</comment>
<comment type="catalytic activity">
    <reaction evidence="1">
        <text>(6R)-5,10-methenyltetrahydrofolate + H2O = (6R)-10-formyltetrahydrofolate + H(+)</text>
        <dbReference type="Rhea" id="RHEA:23700"/>
        <dbReference type="ChEBI" id="CHEBI:15377"/>
        <dbReference type="ChEBI" id="CHEBI:15378"/>
        <dbReference type="ChEBI" id="CHEBI:57455"/>
        <dbReference type="ChEBI" id="CHEBI:195366"/>
        <dbReference type="EC" id="3.5.4.9"/>
    </reaction>
</comment>
<comment type="pathway">
    <text evidence="1">One-carbon metabolism; tetrahydrofolate interconversion.</text>
</comment>
<comment type="subunit">
    <text evidence="1">Homodimer.</text>
</comment>
<comment type="similarity">
    <text evidence="1">Belongs to the tetrahydrofolate dehydrogenase/cyclohydrolase family.</text>
</comment>
<evidence type="ECO:0000255" key="1">
    <source>
        <dbReference type="HAMAP-Rule" id="MF_01576"/>
    </source>
</evidence>